<accession>Q09X07</accession>
<sequence>MTTISNLPAIFVPLVGLVFPAIAMVSLSLHVQKNKIF</sequence>
<dbReference type="EMBL" id="DQ226511">
    <property type="protein sequence ID" value="ABD77442.1"/>
    <property type="molecule type" value="Genomic_DNA"/>
</dbReference>
<dbReference type="RefSeq" id="YP_762271.1">
    <property type="nucleotide sequence ID" value="NC_008359.1"/>
</dbReference>
<dbReference type="SMR" id="Q09X07"/>
<dbReference type="GeneID" id="4290579"/>
<dbReference type="GO" id="GO:0009535">
    <property type="term" value="C:chloroplast thylakoid membrane"/>
    <property type="evidence" value="ECO:0007669"/>
    <property type="project" value="UniProtKB-SubCell"/>
</dbReference>
<dbReference type="GO" id="GO:0009522">
    <property type="term" value="C:photosystem I"/>
    <property type="evidence" value="ECO:0007669"/>
    <property type="project" value="UniProtKB-KW"/>
</dbReference>
<dbReference type="GO" id="GO:0015979">
    <property type="term" value="P:photosynthesis"/>
    <property type="evidence" value="ECO:0007669"/>
    <property type="project" value="UniProtKB-UniRule"/>
</dbReference>
<dbReference type="HAMAP" id="MF_00431">
    <property type="entry name" value="PSI_PsaI"/>
    <property type="match status" value="1"/>
</dbReference>
<dbReference type="InterPro" id="IPR001302">
    <property type="entry name" value="PSI_PsaI"/>
</dbReference>
<dbReference type="InterPro" id="IPR036357">
    <property type="entry name" value="PSI_PsaI_sf"/>
</dbReference>
<dbReference type="NCBIfam" id="TIGR03052">
    <property type="entry name" value="PS_I_psaI"/>
    <property type="match status" value="1"/>
</dbReference>
<dbReference type="PANTHER" id="PTHR35775">
    <property type="match status" value="1"/>
</dbReference>
<dbReference type="PANTHER" id="PTHR35775:SF2">
    <property type="entry name" value="PHOTOSYSTEM I REACTION CENTER SUBUNIT VIII"/>
    <property type="match status" value="1"/>
</dbReference>
<dbReference type="Pfam" id="PF00796">
    <property type="entry name" value="PSI_8"/>
    <property type="match status" value="1"/>
</dbReference>
<dbReference type="SUPFAM" id="SSF81540">
    <property type="entry name" value="Subunit VIII of photosystem I reaction centre, PsaI"/>
    <property type="match status" value="1"/>
</dbReference>
<gene>
    <name evidence="1" type="primary">psaI</name>
    <name type="ordered locus">MoinCp031</name>
</gene>
<reference key="1">
    <citation type="submission" date="2005-09" db="EMBL/GenBank/DDBJ databases">
        <title>The chloroplast genome of mulberry: structural features and comparative analysis.</title>
        <authorList>
            <person name="Ravi V."/>
            <person name="Khurana J.P."/>
            <person name="Tyagi A.K."/>
            <person name="Khurana P."/>
        </authorList>
    </citation>
    <scope>NUCLEOTIDE SEQUENCE [LARGE SCALE GENOMIC DNA]</scope>
    <source>
        <strain>cv. K2</strain>
    </source>
</reference>
<comment type="function">
    <text evidence="1">May help in the organization of the PsaL subunit.</text>
</comment>
<comment type="subcellular location">
    <subcellularLocation>
        <location evidence="1">Plastid</location>
        <location evidence="1">Chloroplast thylakoid membrane</location>
        <topology evidence="1">Single-pass membrane protein</topology>
    </subcellularLocation>
</comment>
<comment type="similarity">
    <text evidence="1">Belongs to the PsaI family.</text>
</comment>
<geneLocation type="chloroplast"/>
<name>PSAI_MORIN</name>
<proteinExistence type="inferred from homology"/>
<feature type="chain" id="PRO_0000276027" description="Photosystem I reaction center subunit VIII">
    <location>
        <begin position="1"/>
        <end position="37"/>
    </location>
</feature>
<feature type="transmembrane region" description="Helical" evidence="1">
    <location>
        <begin position="7"/>
        <end position="27"/>
    </location>
</feature>
<evidence type="ECO:0000255" key="1">
    <source>
        <dbReference type="HAMAP-Rule" id="MF_00431"/>
    </source>
</evidence>
<keyword id="KW-0150">Chloroplast</keyword>
<keyword id="KW-0472">Membrane</keyword>
<keyword id="KW-0602">Photosynthesis</keyword>
<keyword id="KW-0603">Photosystem I</keyword>
<keyword id="KW-0934">Plastid</keyword>
<keyword id="KW-0793">Thylakoid</keyword>
<keyword id="KW-0812">Transmembrane</keyword>
<keyword id="KW-1133">Transmembrane helix</keyword>
<organism>
    <name type="scientific">Morus indica</name>
    <name type="common">Mulberry</name>
    <dbReference type="NCBI Taxonomy" id="248361"/>
    <lineage>
        <taxon>Eukaryota</taxon>
        <taxon>Viridiplantae</taxon>
        <taxon>Streptophyta</taxon>
        <taxon>Embryophyta</taxon>
        <taxon>Tracheophyta</taxon>
        <taxon>Spermatophyta</taxon>
        <taxon>Magnoliopsida</taxon>
        <taxon>eudicotyledons</taxon>
        <taxon>Gunneridae</taxon>
        <taxon>Pentapetalae</taxon>
        <taxon>rosids</taxon>
        <taxon>fabids</taxon>
        <taxon>Rosales</taxon>
        <taxon>Moraceae</taxon>
        <taxon>Moreae</taxon>
        <taxon>Morus</taxon>
    </lineage>
</organism>
<protein>
    <recommendedName>
        <fullName evidence="1">Photosystem I reaction center subunit VIII</fullName>
        <shortName evidence="1">PSI-I</shortName>
    </recommendedName>
</protein>